<feature type="signal peptide" evidence="2">
    <location>
        <begin position="1"/>
        <end position="20"/>
    </location>
</feature>
<feature type="propeptide" id="PRO_0000401613" evidence="1">
    <location>
        <begin position="21"/>
        <end position="44"/>
    </location>
</feature>
<feature type="chain" id="PRO_0000401614" description="U3-lycotoxin-Ls1k">
    <location>
        <begin position="45"/>
        <end position="115"/>
    </location>
</feature>
<feature type="disulfide bond" evidence="1">
    <location>
        <begin position="48"/>
        <end position="63"/>
    </location>
</feature>
<feature type="disulfide bond" evidence="1">
    <location>
        <begin position="55"/>
        <end position="72"/>
    </location>
</feature>
<feature type="disulfide bond" evidence="1">
    <location>
        <begin position="62"/>
        <end position="87"/>
    </location>
</feature>
<feature type="disulfide bond" evidence="1">
    <location>
        <begin position="74"/>
        <end position="85"/>
    </location>
</feature>
<keyword id="KW-1015">Disulfide bond</keyword>
<keyword id="KW-0960">Knottin</keyword>
<keyword id="KW-0964">Secreted</keyword>
<keyword id="KW-0732">Signal</keyword>
<keyword id="KW-0800">Toxin</keyword>
<comment type="subcellular location">
    <subcellularLocation>
        <location evidence="1">Secreted</location>
    </subcellularLocation>
</comment>
<comment type="tissue specificity">
    <text>Expressed by the venom gland.</text>
</comment>
<comment type="domain">
    <text evidence="1">The presence of a 'disulfide through disulfide knot' structurally defines this protein as a knottin.</text>
</comment>
<comment type="similarity">
    <text evidence="3">Belongs to the neurotoxin 19 (CSTX) family. 01 subfamily.</text>
</comment>
<comment type="sequence caution" evidence="3">
    <conflict type="frameshift">
        <sequence resource="EMBL-CDS" id="ACI41314"/>
    </conflict>
</comment>
<proteinExistence type="evidence at transcript level"/>
<dbReference type="EMBL" id="EU925982">
    <property type="protein sequence ID" value="ACI41314.1"/>
    <property type="status" value="ALT_FRAME"/>
    <property type="molecule type" value="mRNA"/>
</dbReference>
<dbReference type="EMBL" id="EU926004">
    <property type="protein sequence ID" value="ACI41336.1"/>
    <property type="molecule type" value="mRNA"/>
</dbReference>
<dbReference type="EMBL" id="FM863986">
    <property type="protein sequence ID" value="CAS03584.1"/>
    <property type="molecule type" value="mRNA"/>
</dbReference>
<dbReference type="EMBL" id="FM864008">
    <property type="protein sequence ID" value="CAS03606.1"/>
    <property type="molecule type" value="mRNA"/>
</dbReference>
<dbReference type="SMR" id="B6DCS0"/>
<dbReference type="ArachnoServer" id="AS000953">
    <property type="toxin name" value="U3-lycotoxin-Ls1k"/>
</dbReference>
<dbReference type="ArachnoServer" id="AS000931">
    <property type="toxin name" value="U3-lycotoxin-Ls1m"/>
</dbReference>
<dbReference type="GO" id="GO:0005576">
    <property type="term" value="C:extracellular region"/>
    <property type="evidence" value="ECO:0007669"/>
    <property type="project" value="UniProtKB-SubCell"/>
</dbReference>
<dbReference type="GO" id="GO:0090729">
    <property type="term" value="F:toxin activity"/>
    <property type="evidence" value="ECO:0007669"/>
    <property type="project" value="UniProtKB-KW"/>
</dbReference>
<dbReference type="InterPro" id="IPR019553">
    <property type="entry name" value="Spider_toxin_CSTX_knottin"/>
</dbReference>
<dbReference type="InterPro" id="IPR011142">
    <property type="entry name" value="Spider_toxin_CSTX_Knottin_CS"/>
</dbReference>
<dbReference type="Pfam" id="PF10530">
    <property type="entry name" value="Toxin_35"/>
    <property type="match status" value="1"/>
</dbReference>
<dbReference type="PROSITE" id="PS60029">
    <property type="entry name" value="SPIDER_CSTX"/>
    <property type="match status" value="1"/>
</dbReference>
<reference key="1">
    <citation type="journal article" date="2010" name="Zoology">
        <title>Transcriptome analysis of the venom glands of the Chinese wolf spider Lycosa singoriensis.</title>
        <authorList>
            <person name="Zhang Y."/>
            <person name="Chen J."/>
            <person name="Tang X."/>
            <person name="Wang F."/>
            <person name="Jiang L."/>
            <person name="Xiong X."/>
            <person name="Wang M."/>
            <person name="Rong M."/>
            <person name="Liu Z."/>
            <person name="Liang S."/>
        </authorList>
    </citation>
    <scope>NUCLEOTIDE SEQUENCE [LARGE SCALE MRNA]</scope>
    <source>
        <tissue>Venom gland</tissue>
    </source>
</reference>
<sequence>MKFVLLFGVLLVTLFSYSSAEMLDDFDQADEDELLSLIEKEEARAKECTPRFYDCSHDRHSCCRSELFKDVCTCFYPEGGDNEVCTCQQPKHLKYMEKAAGKAKKFGGKIKKWFG</sequence>
<evidence type="ECO:0000250" key="1"/>
<evidence type="ECO:0000255" key="2"/>
<evidence type="ECO:0000305" key="3"/>
<protein>
    <recommendedName>
        <fullName>U3-lycotoxin-Ls1k</fullName>
    </recommendedName>
    <alternativeName>
        <fullName>Toxin-like structure LSTX-B25</fullName>
    </alternativeName>
    <alternativeName>
        <fullName>Toxin-like structure LSTX-B3</fullName>
    </alternativeName>
</protein>
<name>TX303_LYCSI</name>
<accession>B6DCS0</accession>
<accession>B6DCP8</accession>
<organism>
    <name type="scientific">Lycosa singoriensis</name>
    <name type="common">Wolf spider</name>
    <name type="synonym">Aranea singoriensis</name>
    <dbReference type="NCBI Taxonomy" id="434756"/>
    <lineage>
        <taxon>Eukaryota</taxon>
        <taxon>Metazoa</taxon>
        <taxon>Ecdysozoa</taxon>
        <taxon>Arthropoda</taxon>
        <taxon>Chelicerata</taxon>
        <taxon>Arachnida</taxon>
        <taxon>Araneae</taxon>
        <taxon>Araneomorphae</taxon>
        <taxon>Entelegynae</taxon>
        <taxon>Lycosoidea</taxon>
        <taxon>Lycosidae</taxon>
        <taxon>Lycosa</taxon>
    </lineage>
</organism>